<name>RLMH_MESHJ</name>
<organism>
    <name type="scientific">Mesomycoplasma hyopneumoniae (strain J / ATCC 25934 / NCTC 10110)</name>
    <name type="common">Mycoplasma hyopneumoniae</name>
    <dbReference type="NCBI Taxonomy" id="262719"/>
    <lineage>
        <taxon>Bacteria</taxon>
        <taxon>Bacillati</taxon>
        <taxon>Mycoplasmatota</taxon>
        <taxon>Mycoplasmoidales</taxon>
        <taxon>Metamycoplasmataceae</taxon>
        <taxon>Mesomycoplasma</taxon>
    </lineage>
</organism>
<evidence type="ECO:0000255" key="1">
    <source>
        <dbReference type="HAMAP-Rule" id="MF_00658"/>
    </source>
</evidence>
<proteinExistence type="inferred from homology"/>
<comment type="function">
    <text evidence="1">Specifically methylates the pseudouridine at position 1915 (m3Psi1915) in 23S rRNA.</text>
</comment>
<comment type="catalytic activity">
    <reaction evidence="1">
        <text>pseudouridine(1915) in 23S rRNA + S-adenosyl-L-methionine = N(3)-methylpseudouridine(1915) in 23S rRNA + S-adenosyl-L-homocysteine + H(+)</text>
        <dbReference type="Rhea" id="RHEA:42752"/>
        <dbReference type="Rhea" id="RHEA-COMP:10221"/>
        <dbReference type="Rhea" id="RHEA-COMP:10222"/>
        <dbReference type="ChEBI" id="CHEBI:15378"/>
        <dbReference type="ChEBI" id="CHEBI:57856"/>
        <dbReference type="ChEBI" id="CHEBI:59789"/>
        <dbReference type="ChEBI" id="CHEBI:65314"/>
        <dbReference type="ChEBI" id="CHEBI:74486"/>
        <dbReference type="EC" id="2.1.1.177"/>
    </reaction>
</comment>
<comment type="subunit">
    <text evidence="1">Homodimer.</text>
</comment>
<comment type="subcellular location">
    <subcellularLocation>
        <location evidence="1">Cytoplasm</location>
    </subcellularLocation>
</comment>
<comment type="similarity">
    <text evidence="1">Belongs to the RNA methyltransferase RlmH family.</text>
</comment>
<sequence length="152" mass="17768">MKISIISFGSSPREWLGLYKKEINKIKQFKYQIEFINLSEHSQENIELKKMLETKDILQKIPKNSSCYLFTERGKTVTSKEFSQLLNFSNICFIIGGSYGVDEKLIAKSRPDIGFLSFGKLTFAHKIFKLIVLEQIYRGFSIKFNRKYHHAD</sequence>
<protein>
    <recommendedName>
        <fullName evidence="1">Ribosomal RNA large subunit methyltransferase H</fullName>
        <ecNumber evidence="1">2.1.1.177</ecNumber>
    </recommendedName>
    <alternativeName>
        <fullName evidence="1">23S rRNA (pseudouridine1915-N3)-methyltransferase</fullName>
    </alternativeName>
    <alternativeName>
        <fullName evidence="1">23S rRNA m3Psi1915 methyltransferase</fullName>
    </alternativeName>
    <alternativeName>
        <fullName evidence="1">rRNA (pseudouridine-N3-)-methyltransferase RlmH</fullName>
    </alternativeName>
</protein>
<feature type="chain" id="PRO_1000061811" description="Ribosomal RNA large subunit methyltransferase H">
    <location>
        <begin position="1"/>
        <end position="152"/>
    </location>
</feature>
<feature type="binding site" evidence="1">
    <location>
        <position position="69"/>
    </location>
    <ligand>
        <name>S-adenosyl-L-methionine</name>
        <dbReference type="ChEBI" id="CHEBI:59789"/>
    </ligand>
</feature>
<feature type="binding site" evidence="1">
    <location>
        <position position="96"/>
    </location>
    <ligand>
        <name>S-adenosyl-L-methionine</name>
        <dbReference type="ChEBI" id="CHEBI:59789"/>
    </ligand>
</feature>
<feature type="binding site" evidence="1">
    <location>
        <begin position="118"/>
        <end position="123"/>
    </location>
    <ligand>
        <name>S-adenosyl-L-methionine</name>
        <dbReference type="ChEBI" id="CHEBI:59789"/>
    </ligand>
</feature>
<keyword id="KW-0963">Cytoplasm</keyword>
<keyword id="KW-0489">Methyltransferase</keyword>
<keyword id="KW-0698">rRNA processing</keyword>
<keyword id="KW-0949">S-adenosyl-L-methionine</keyword>
<keyword id="KW-0808">Transferase</keyword>
<accession>Q4AAU5</accession>
<dbReference type="EC" id="2.1.1.177" evidence="1"/>
<dbReference type="EMBL" id="AE017243">
    <property type="protein sequence ID" value="AAZ44098.2"/>
    <property type="molecule type" value="Genomic_DNA"/>
</dbReference>
<dbReference type="RefSeq" id="WP_011205843.1">
    <property type="nucleotide sequence ID" value="NC_007295.1"/>
</dbReference>
<dbReference type="SMR" id="Q4AAU5"/>
<dbReference type="GeneID" id="41334291"/>
<dbReference type="KEGG" id="mhj:MHJ_0004"/>
<dbReference type="eggNOG" id="COG1576">
    <property type="taxonomic scope" value="Bacteria"/>
</dbReference>
<dbReference type="HOGENOM" id="CLU_100552_2_0_14"/>
<dbReference type="OrthoDB" id="9806643at2"/>
<dbReference type="Proteomes" id="UP000000548">
    <property type="component" value="Chromosome"/>
</dbReference>
<dbReference type="GO" id="GO:0005737">
    <property type="term" value="C:cytoplasm"/>
    <property type="evidence" value="ECO:0007669"/>
    <property type="project" value="UniProtKB-SubCell"/>
</dbReference>
<dbReference type="GO" id="GO:0070038">
    <property type="term" value="F:rRNA (pseudouridine-N3-)-methyltransferase activity"/>
    <property type="evidence" value="ECO:0007669"/>
    <property type="project" value="UniProtKB-UniRule"/>
</dbReference>
<dbReference type="CDD" id="cd18081">
    <property type="entry name" value="RlmH-like"/>
    <property type="match status" value="1"/>
</dbReference>
<dbReference type="Gene3D" id="3.40.1280.10">
    <property type="match status" value="1"/>
</dbReference>
<dbReference type="HAMAP" id="MF_00658">
    <property type="entry name" value="23SrRNA_methyltr_H"/>
    <property type="match status" value="1"/>
</dbReference>
<dbReference type="InterPro" id="IPR029028">
    <property type="entry name" value="Alpha/beta_knot_MTases"/>
</dbReference>
<dbReference type="InterPro" id="IPR003742">
    <property type="entry name" value="RlmH-like"/>
</dbReference>
<dbReference type="InterPro" id="IPR029026">
    <property type="entry name" value="tRNA_m1G_MTases_N"/>
</dbReference>
<dbReference type="PANTHER" id="PTHR33603">
    <property type="entry name" value="METHYLTRANSFERASE"/>
    <property type="match status" value="1"/>
</dbReference>
<dbReference type="PANTHER" id="PTHR33603:SF1">
    <property type="entry name" value="RIBOSOMAL RNA LARGE SUBUNIT METHYLTRANSFERASE H"/>
    <property type="match status" value="1"/>
</dbReference>
<dbReference type="Pfam" id="PF02590">
    <property type="entry name" value="SPOUT_MTase"/>
    <property type="match status" value="1"/>
</dbReference>
<dbReference type="PIRSF" id="PIRSF004505">
    <property type="entry name" value="MT_bac"/>
    <property type="match status" value="1"/>
</dbReference>
<dbReference type="SUPFAM" id="SSF75217">
    <property type="entry name" value="alpha/beta knot"/>
    <property type="match status" value="1"/>
</dbReference>
<reference key="1">
    <citation type="journal article" date="2005" name="J. Bacteriol.">
        <title>Swine and poultry pathogens: the complete genome sequences of two strains of Mycoplasma hyopneumoniae and a strain of Mycoplasma synoviae.</title>
        <authorList>
            <person name="Vasconcelos A.T.R."/>
            <person name="Ferreira H.B."/>
            <person name="Bizarro C.V."/>
            <person name="Bonatto S.L."/>
            <person name="Carvalho M.O."/>
            <person name="Pinto P.M."/>
            <person name="Almeida D.F."/>
            <person name="Almeida L.G.P."/>
            <person name="Almeida R."/>
            <person name="Alves-Junior L."/>
            <person name="Assuncao E.N."/>
            <person name="Azevedo V.A.C."/>
            <person name="Bogo M.R."/>
            <person name="Brigido M.M."/>
            <person name="Brocchi M."/>
            <person name="Burity H.A."/>
            <person name="Camargo A.A."/>
            <person name="Camargo S.S."/>
            <person name="Carepo M.S."/>
            <person name="Carraro D.M."/>
            <person name="de Mattos Cascardo J.C."/>
            <person name="Castro L.A."/>
            <person name="Cavalcanti G."/>
            <person name="Chemale G."/>
            <person name="Collevatti R.G."/>
            <person name="Cunha C.W."/>
            <person name="Dallagiovanna B."/>
            <person name="Dambros B.P."/>
            <person name="Dellagostin O.A."/>
            <person name="Falcao C."/>
            <person name="Fantinatti-Garboggini F."/>
            <person name="Felipe M.S.S."/>
            <person name="Fiorentin L."/>
            <person name="Franco G.R."/>
            <person name="Freitas N.S.A."/>
            <person name="Frias D."/>
            <person name="Grangeiro T.B."/>
            <person name="Grisard E.C."/>
            <person name="Guimaraes C.T."/>
            <person name="Hungria M."/>
            <person name="Jardim S.N."/>
            <person name="Krieger M.A."/>
            <person name="Laurino J.P."/>
            <person name="Lima L.F.A."/>
            <person name="Lopes M.I."/>
            <person name="Loreto E.L.S."/>
            <person name="Madeira H.M.F."/>
            <person name="Manfio G.P."/>
            <person name="Maranhao A.Q."/>
            <person name="Martinkovics C.T."/>
            <person name="Medeiros S.R.B."/>
            <person name="Moreira M.A.M."/>
            <person name="Neiva M."/>
            <person name="Ramalho-Neto C.E."/>
            <person name="Nicolas M.F."/>
            <person name="Oliveira S.C."/>
            <person name="Paixao R.F.C."/>
            <person name="Pedrosa F.O."/>
            <person name="Pena S.D.J."/>
            <person name="Pereira M."/>
            <person name="Pereira-Ferrari L."/>
            <person name="Piffer I."/>
            <person name="Pinto L.S."/>
            <person name="Potrich D.P."/>
            <person name="Salim A.C.M."/>
            <person name="Santos F.R."/>
            <person name="Schmitt R."/>
            <person name="Schneider M.P.C."/>
            <person name="Schrank A."/>
            <person name="Schrank I.S."/>
            <person name="Schuck A.F."/>
            <person name="Seuanez H.N."/>
            <person name="Silva D.W."/>
            <person name="Silva R."/>
            <person name="Silva S.C."/>
            <person name="Soares C.M.A."/>
            <person name="Souza K.R.L."/>
            <person name="Souza R.C."/>
            <person name="Staats C.C."/>
            <person name="Steffens M.B.R."/>
            <person name="Teixeira S.M.R."/>
            <person name="Urmenyi T.P."/>
            <person name="Vainstein M.H."/>
            <person name="Zuccherato L.W."/>
            <person name="Simpson A.J.G."/>
            <person name="Zaha A."/>
        </authorList>
    </citation>
    <scope>NUCLEOTIDE SEQUENCE [LARGE SCALE GENOMIC DNA]</scope>
    <source>
        <strain>J / ATCC 25934 / NCTC 10110</strain>
    </source>
</reference>
<gene>
    <name evidence="1" type="primary">rlmH</name>
    <name type="ordered locus">MHJ_0004</name>
</gene>